<proteinExistence type="evidence at transcript level"/>
<accession>O62416</accession>
<dbReference type="EMBL" id="BX284605">
    <property type="protein sequence ID" value="CAA16324.1"/>
    <property type="molecule type" value="Genomic_DNA"/>
</dbReference>
<dbReference type="PIR" id="T26555">
    <property type="entry name" value="T26555"/>
</dbReference>
<dbReference type="RefSeq" id="NP_505643.1">
    <property type="nucleotide sequence ID" value="NM_073242.7"/>
</dbReference>
<dbReference type="SMR" id="O62416"/>
<dbReference type="DIP" id="DIP-25152N"/>
<dbReference type="FunCoup" id="O62416">
    <property type="interactions" value="4"/>
</dbReference>
<dbReference type="IntAct" id="O62416">
    <property type="interactions" value="2"/>
</dbReference>
<dbReference type="STRING" id="6239.Y22F5A.5.1"/>
<dbReference type="PaxDb" id="6239-Y22F5A.5"/>
<dbReference type="PeptideAtlas" id="O62416"/>
<dbReference type="EnsemblMetazoa" id="Y22F5A.5.1">
    <property type="protein sequence ID" value="Y22F5A.5.1"/>
    <property type="gene ID" value="WBGene00003091"/>
</dbReference>
<dbReference type="GeneID" id="179429"/>
<dbReference type="KEGG" id="cel:CELE_Y22F5A.5"/>
<dbReference type="UCSC" id="Y22F5A.5">
    <property type="organism name" value="c. elegans"/>
</dbReference>
<dbReference type="AGR" id="WB:WBGene00003091"/>
<dbReference type="CTD" id="179429"/>
<dbReference type="WormBase" id="Y22F5A.5">
    <property type="protein sequence ID" value="CE16606"/>
    <property type="gene ID" value="WBGene00003091"/>
    <property type="gene designation" value="lys-2"/>
</dbReference>
<dbReference type="eggNOG" id="ENOG502S5RB">
    <property type="taxonomic scope" value="Eukaryota"/>
</dbReference>
<dbReference type="GeneTree" id="ENSGT00970000195882"/>
<dbReference type="HOGENOM" id="CLU_073372_1_0_1"/>
<dbReference type="InParanoid" id="O62416"/>
<dbReference type="OMA" id="QYAQVET"/>
<dbReference type="OrthoDB" id="25039at2759"/>
<dbReference type="PhylomeDB" id="O62416"/>
<dbReference type="PRO" id="PR:O62416"/>
<dbReference type="Proteomes" id="UP000001940">
    <property type="component" value="Chromosome V"/>
</dbReference>
<dbReference type="Bgee" id="WBGene00003091">
    <property type="expression patterns" value="Expressed in larva and 4 other cell types or tissues"/>
</dbReference>
<dbReference type="GO" id="GO:0003796">
    <property type="term" value="F:lysozyme activity"/>
    <property type="evidence" value="ECO:0000250"/>
    <property type="project" value="WormBase"/>
</dbReference>
<dbReference type="GO" id="GO:0016998">
    <property type="term" value="P:cell wall macromolecule catabolic process"/>
    <property type="evidence" value="ECO:0007669"/>
    <property type="project" value="InterPro"/>
</dbReference>
<dbReference type="GO" id="GO:0050829">
    <property type="term" value="P:defense response to Gram-negative bacterium"/>
    <property type="evidence" value="ECO:0000315"/>
    <property type="project" value="WormBase"/>
</dbReference>
<dbReference type="GO" id="GO:0050830">
    <property type="term" value="P:defense response to Gram-positive bacterium"/>
    <property type="evidence" value="ECO:0000315"/>
    <property type="project" value="WormBase"/>
</dbReference>
<dbReference type="GO" id="GO:0045087">
    <property type="term" value="P:innate immune response"/>
    <property type="evidence" value="ECO:0000315"/>
    <property type="project" value="WormBase"/>
</dbReference>
<dbReference type="GO" id="GO:0009253">
    <property type="term" value="P:peptidoglycan catabolic process"/>
    <property type="evidence" value="ECO:0000250"/>
    <property type="project" value="WormBase"/>
</dbReference>
<dbReference type="GO" id="GO:0007165">
    <property type="term" value="P:signal transduction"/>
    <property type="evidence" value="ECO:0000318"/>
    <property type="project" value="GO_Central"/>
</dbReference>
<dbReference type="CDD" id="cd06416">
    <property type="entry name" value="GH25_Lys1-like"/>
    <property type="match status" value="1"/>
</dbReference>
<dbReference type="FunFam" id="3.20.20.80:FF:000129">
    <property type="entry name" value="Lysozyme-like protein 7"/>
    <property type="match status" value="1"/>
</dbReference>
<dbReference type="Gene3D" id="3.20.20.80">
    <property type="entry name" value="Glycosidases"/>
    <property type="match status" value="1"/>
</dbReference>
<dbReference type="InterPro" id="IPR051595">
    <property type="entry name" value="GH25_Enzymes"/>
</dbReference>
<dbReference type="InterPro" id="IPR002053">
    <property type="entry name" value="Glyco_hydro_25"/>
</dbReference>
<dbReference type="InterPro" id="IPR017853">
    <property type="entry name" value="Glycoside_hydrolase_SF"/>
</dbReference>
<dbReference type="PANTHER" id="PTHR23208">
    <property type="entry name" value="LYSOZYME PROTEIN"/>
    <property type="match status" value="1"/>
</dbReference>
<dbReference type="PANTHER" id="PTHR23208:SF21">
    <property type="entry name" value="LYSOZYME-LIKE PROTEIN 2"/>
    <property type="match status" value="1"/>
</dbReference>
<dbReference type="SUPFAM" id="SSF51445">
    <property type="entry name" value="(Trans)glycosidases"/>
    <property type="match status" value="1"/>
</dbReference>
<dbReference type="PROSITE" id="PS51904">
    <property type="entry name" value="GLYCOSYL_HYDROL_F25_2"/>
    <property type="match status" value="1"/>
</dbReference>
<reference evidence="6" key="1">
    <citation type="journal article" date="1998" name="Science">
        <title>Genome sequence of the nematode C. elegans: a platform for investigating biology.</title>
        <authorList>
            <consortium name="The C. elegans sequencing consortium"/>
        </authorList>
    </citation>
    <scope>NUCLEOTIDE SEQUENCE [LARGE SCALE GENOMIC DNA]</scope>
    <source>
        <strain evidence="6">Bristol N2</strain>
    </source>
</reference>
<reference evidence="5" key="2">
    <citation type="journal article" date="2011" name="PLoS ONE">
        <title>Protist-type lysozymes of the nematode Caenorhabditis elegans contribute to resistance against pathogenic Bacillus thuringiensis.</title>
        <authorList>
            <person name="Boehnisch C."/>
            <person name="Wong D."/>
            <person name="Habig M."/>
            <person name="Isermann K."/>
            <person name="Michiels N.K."/>
            <person name="Roeder T."/>
            <person name="May R.C."/>
            <person name="Schulenburg H."/>
        </authorList>
    </citation>
    <scope>FUNCTION</scope>
    <scope>INDUCTION</scope>
    <scope>DISRUPTION PHENOTYPE</scope>
</reference>
<reference evidence="5" key="3">
    <citation type="journal article" date="2014" name="Nature">
        <title>Mitochondrial UPR-regulated innate immunity provides resistance to pathogen infection.</title>
        <authorList>
            <person name="Pellegrino M.W."/>
            <person name="Nargund A.M."/>
            <person name="Kirienko N.V."/>
            <person name="Gillis R."/>
            <person name="Fiorese C.J."/>
            <person name="Haynes C.M."/>
        </authorList>
    </citation>
    <scope>FUNCTION</scope>
    <scope>TISSUE SPECIFICITY</scope>
    <scope>INDUCTION</scope>
    <scope>DISRUPTION PHENOTYPE</scope>
</reference>
<organism evidence="6">
    <name type="scientific">Caenorhabditis elegans</name>
    <dbReference type="NCBI Taxonomy" id="6239"/>
    <lineage>
        <taxon>Eukaryota</taxon>
        <taxon>Metazoa</taxon>
        <taxon>Ecdysozoa</taxon>
        <taxon>Nematoda</taxon>
        <taxon>Chromadorea</taxon>
        <taxon>Rhabditida</taxon>
        <taxon>Rhabditina</taxon>
        <taxon>Rhabditomorpha</taxon>
        <taxon>Rhabditoidea</taxon>
        <taxon>Rhabditidae</taxon>
        <taxon>Peloderinae</taxon>
        <taxon>Caenorhabditis</taxon>
    </lineage>
</organism>
<evidence type="ECO:0000255" key="1"/>
<evidence type="ECO:0000255" key="2">
    <source>
        <dbReference type="PROSITE-ProRule" id="PRU01252"/>
    </source>
</evidence>
<evidence type="ECO:0000269" key="3">
    <source>
    </source>
</evidence>
<evidence type="ECO:0000269" key="4">
    <source>
    </source>
</evidence>
<evidence type="ECO:0000305" key="5"/>
<evidence type="ECO:0000312" key="6">
    <source>
        <dbReference type="Proteomes" id="UP000001940"/>
    </source>
</evidence>
<evidence type="ECO:0000312" key="7">
    <source>
        <dbReference type="WormBase" id="Y22F5A.5"/>
    </source>
</evidence>
<comment type="function">
    <text evidence="3 4">Involved in resistance to Gram-positive bacteria P.aeruginosa or B.thuringiensis infection.</text>
</comment>
<comment type="tissue specificity">
    <text evidence="4">Expressed in intestine.</text>
</comment>
<comment type="induction">
    <text evidence="3 4">Induced in response to Gram-positive bacterium P.aeruginosa infection and to mitochondrial stress in the intestine (PubMed:25274306). Induced in response to Gram-positive bacterium B.thuringiensis (B-18247) infection (PubMed:21931778).</text>
</comment>
<comment type="disruption phenotype">
    <text evidence="3 4">Reduced survival following bacterium B.thuringiensis (B-18247) infection (PubMed:21931778). RNAi-mediated knockdown causes a reduction in survival following bacterium P.aeruginosa infection (PubMed:25274306).</text>
</comment>
<comment type="similarity">
    <text evidence="2 5">Belongs to the glycosyl hydrolase 25 family.</text>
</comment>
<comment type="caution">
    <text evidence="5">Lacks conserved active site residues, suggesting it has no catalytic activity.</text>
</comment>
<feature type="signal peptide" evidence="1">
    <location>
        <begin position="1"/>
        <end position="19"/>
    </location>
</feature>
<feature type="chain" id="PRO_5004159432" description="Lysozyme-like protein 2" evidence="1">
    <location>
        <begin position="20"/>
        <end position="279"/>
    </location>
</feature>
<feature type="domain" description="Ch-type lysozyme" evidence="2">
    <location>
        <begin position="47"/>
        <end position="265"/>
    </location>
</feature>
<gene>
    <name evidence="7" type="primary">lys-2</name>
    <name evidence="7" type="ORF">Y22F5A.5</name>
</gene>
<keyword id="KW-0929">Antimicrobial</keyword>
<keyword id="KW-0391">Immunity</keyword>
<keyword id="KW-0399">Innate immunity</keyword>
<keyword id="KW-1185">Reference proteome</keyword>
<keyword id="KW-0732">Signal</keyword>
<sequence length="279" mass="30291">MIKLLVSFTILFVLSSARPQEIDSNQAAIANTEANEAPVIVNNDASMGNAVDFSFPTNVQVMNCLKKAKYQVVFLRGFVPTGNGAFDSNCVGNIRNAYSAGLGIETYMTPQPISSWQGYQQLDLLYNGLNNNGITIRSVWIQVTSPANWPNNPTANVNFINSIISRAQQYGLSVGIYTNQYDWSQITGNSANINSNVMLWYWNVLGGGTSGETKPTFADFRAFGPFKKASVKQYAQVETVCNLVVNRDVYAVGIPAAAPKTEVNMADGEKIVVGGFVGN</sequence>
<name>LYS2_CAEEL</name>
<protein>
    <recommendedName>
        <fullName evidence="5">Lysozyme-like protein 2</fullName>
    </recommendedName>
</protein>